<organism>
    <name type="scientific">Agrobacterium tumefaciens (strain 15955)</name>
    <dbReference type="NCBI Taxonomy" id="190386"/>
    <lineage>
        <taxon>Bacteria</taxon>
        <taxon>Pseudomonadati</taxon>
        <taxon>Pseudomonadota</taxon>
        <taxon>Alphaproteobacteria</taxon>
        <taxon>Hyphomicrobiales</taxon>
        <taxon>Rhizobiaceae</taxon>
        <taxon>Rhizobium/Agrobacterium group</taxon>
        <taxon>Agrobacterium</taxon>
        <taxon>Agrobacterium tumefaciens complex</taxon>
    </lineage>
</organism>
<dbReference type="EMBL" id="X00493">
    <property type="protein sequence ID" value="CAA25165.1"/>
    <property type="molecule type" value="Genomic_DNA"/>
</dbReference>
<dbReference type="PIR" id="A93506">
    <property type="entry name" value="Q7AGOT"/>
</dbReference>
<dbReference type="RefSeq" id="NP_059674.1">
    <property type="nucleotide sequence ID" value="NC_002377.1"/>
</dbReference>
<name>YP7_AGRT9</name>
<accession>P0A3J9</accession>
<accession>P03867</accession>
<feature type="chain" id="PRO_0000197041" description="Uncharacterized protein 7">
    <location>
        <begin position="1"/>
        <end position="126"/>
    </location>
</feature>
<keyword id="KW-0192">Crown gall tumor</keyword>
<keyword id="KW-0614">Plasmid</keyword>
<reference key="1">
    <citation type="journal article" date="1983" name="Plant Mol. Biol.">
        <title>Nucleotide sequence of the T-DNA region from the Agrobacterium tumefaciens octopine Ti plasmid pTi15955.</title>
        <authorList>
            <person name="Barker R.F."/>
            <person name="Idler K.B."/>
            <person name="Thompson D.V."/>
            <person name="Kemp J.D."/>
        </authorList>
        <dbReference type="AGRICOLA" id="IND84096335"/>
    </citation>
    <scope>NUCLEOTIDE SEQUENCE [GENOMIC DNA]</scope>
</reference>
<geneLocation type="plasmid">
    <name>pTi15955</name>
</geneLocation>
<sequence>MNFADTPLASLDLDWACEEFIKTYGASPQLETGEVIQTNNGLLYLYGKGSLSQRIHDTHLKFKEKEELSFTTIKPAEMKAQQSDLTYYVAIFQSNYFLCVSNPEKGFLRCHNRPFLYPIVAHGSMS</sequence>
<proteinExistence type="predicted"/>
<protein>
    <recommendedName>
        <fullName>Uncharacterized protein 7</fullName>
    </recommendedName>
    <alternativeName>
        <fullName>Open reading frame 3</fullName>
    </alternativeName>
</protein>